<organism>
    <name type="scientific">Pseudomonas fluorescens (strain ATCC BAA-477 / NRRL B-23932 / Pf-5)</name>
    <dbReference type="NCBI Taxonomy" id="220664"/>
    <lineage>
        <taxon>Bacteria</taxon>
        <taxon>Pseudomonadati</taxon>
        <taxon>Pseudomonadota</taxon>
        <taxon>Gammaproteobacteria</taxon>
        <taxon>Pseudomonadales</taxon>
        <taxon>Pseudomonadaceae</taxon>
        <taxon>Pseudomonas</taxon>
    </lineage>
</organism>
<accession>Q4K545</accession>
<name>RL5_PSEF5</name>
<proteinExistence type="inferred from homology"/>
<protein>
    <recommendedName>
        <fullName evidence="1">Large ribosomal subunit protein uL5</fullName>
    </recommendedName>
    <alternativeName>
        <fullName evidence="2">50S ribosomal protein L5</fullName>
    </alternativeName>
</protein>
<keyword id="KW-0687">Ribonucleoprotein</keyword>
<keyword id="KW-0689">Ribosomal protein</keyword>
<keyword id="KW-0694">RNA-binding</keyword>
<keyword id="KW-0699">rRNA-binding</keyword>
<keyword id="KW-0820">tRNA-binding</keyword>
<evidence type="ECO:0000255" key="1">
    <source>
        <dbReference type="HAMAP-Rule" id="MF_01333"/>
    </source>
</evidence>
<evidence type="ECO:0000305" key="2"/>
<comment type="function">
    <text evidence="1">This is one of the proteins that bind and probably mediate the attachment of the 5S RNA into the large ribosomal subunit, where it forms part of the central protuberance. In the 70S ribosome it contacts protein S13 of the 30S subunit (bridge B1b), connecting the 2 subunits; this bridge is implicated in subunit movement. Contacts the P site tRNA; the 5S rRNA and some of its associated proteins might help stabilize positioning of ribosome-bound tRNAs.</text>
</comment>
<comment type="subunit">
    <text evidence="1">Part of the 50S ribosomal subunit; part of the 5S rRNA/L5/L18/L25 subcomplex. Contacts the 5S rRNA and the P site tRNA. Forms a bridge to the 30S subunit in the 70S ribosome.</text>
</comment>
<comment type="similarity">
    <text evidence="1">Belongs to the universal ribosomal protein uL5 family.</text>
</comment>
<reference key="1">
    <citation type="journal article" date="2005" name="Nat. Biotechnol.">
        <title>Complete genome sequence of the plant commensal Pseudomonas fluorescens Pf-5.</title>
        <authorList>
            <person name="Paulsen I.T."/>
            <person name="Press C.M."/>
            <person name="Ravel J."/>
            <person name="Kobayashi D.Y."/>
            <person name="Myers G.S.A."/>
            <person name="Mavrodi D.V."/>
            <person name="DeBoy R.T."/>
            <person name="Seshadri R."/>
            <person name="Ren Q."/>
            <person name="Madupu R."/>
            <person name="Dodson R.J."/>
            <person name="Durkin A.S."/>
            <person name="Brinkac L.M."/>
            <person name="Daugherty S.C."/>
            <person name="Sullivan S.A."/>
            <person name="Rosovitz M.J."/>
            <person name="Gwinn M.L."/>
            <person name="Zhou L."/>
            <person name="Schneider D.J."/>
            <person name="Cartinhour S.W."/>
            <person name="Nelson W.C."/>
            <person name="Weidman J."/>
            <person name="Watkins K."/>
            <person name="Tran K."/>
            <person name="Khouri H."/>
            <person name="Pierson E.A."/>
            <person name="Pierson L.S. III"/>
            <person name="Thomashow L.S."/>
            <person name="Loper J.E."/>
        </authorList>
    </citation>
    <scope>NUCLEOTIDE SEQUENCE [LARGE SCALE GENOMIC DNA]</scope>
    <source>
        <strain>ATCC BAA-477 / NRRL B-23932 / Pf-5</strain>
    </source>
</reference>
<dbReference type="EMBL" id="CP000076">
    <property type="protein sequence ID" value="AAY94775.1"/>
    <property type="molecule type" value="Genomic_DNA"/>
</dbReference>
<dbReference type="RefSeq" id="WP_003210069.1">
    <property type="nucleotide sequence ID" value="NC_004129.6"/>
</dbReference>
<dbReference type="SMR" id="Q4K545"/>
<dbReference type="STRING" id="220664.PFL_5570"/>
<dbReference type="GeneID" id="97827722"/>
<dbReference type="KEGG" id="pfl:PFL_5570"/>
<dbReference type="eggNOG" id="COG0094">
    <property type="taxonomic scope" value="Bacteria"/>
</dbReference>
<dbReference type="HOGENOM" id="CLU_061015_2_1_6"/>
<dbReference type="Proteomes" id="UP000008540">
    <property type="component" value="Chromosome"/>
</dbReference>
<dbReference type="GO" id="GO:1990904">
    <property type="term" value="C:ribonucleoprotein complex"/>
    <property type="evidence" value="ECO:0007669"/>
    <property type="project" value="UniProtKB-KW"/>
</dbReference>
<dbReference type="GO" id="GO:0005840">
    <property type="term" value="C:ribosome"/>
    <property type="evidence" value="ECO:0007669"/>
    <property type="project" value="UniProtKB-KW"/>
</dbReference>
<dbReference type="GO" id="GO:0019843">
    <property type="term" value="F:rRNA binding"/>
    <property type="evidence" value="ECO:0007669"/>
    <property type="project" value="UniProtKB-UniRule"/>
</dbReference>
<dbReference type="GO" id="GO:0003735">
    <property type="term" value="F:structural constituent of ribosome"/>
    <property type="evidence" value="ECO:0007669"/>
    <property type="project" value="InterPro"/>
</dbReference>
<dbReference type="GO" id="GO:0000049">
    <property type="term" value="F:tRNA binding"/>
    <property type="evidence" value="ECO:0007669"/>
    <property type="project" value="UniProtKB-UniRule"/>
</dbReference>
<dbReference type="GO" id="GO:0006412">
    <property type="term" value="P:translation"/>
    <property type="evidence" value="ECO:0007669"/>
    <property type="project" value="UniProtKB-UniRule"/>
</dbReference>
<dbReference type="FunFam" id="3.30.1440.10:FF:000001">
    <property type="entry name" value="50S ribosomal protein L5"/>
    <property type="match status" value="1"/>
</dbReference>
<dbReference type="Gene3D" id="3.30.1440.10">
    <property type="match status" value="1"/>
</dbReference>
<dbReference type="HAMAP" id="MF_01333_B">
    <property type="entry name" value="Ribosomal_uL5_B"/>
    <property type="match status" value="1"/>
</dbReference>
<dbReference type="InterPro" id="IPR002132">
    <property type="entry name" value="Ribosomal_uL5"/>
</dbReference>
<dbReference type="InterPro" id="IPR020930">
    <property type="entry name" value="Ribosomal_uL5_bac-type"/>
</dbReference>
<dbReference type="InterPro" id="IPR031309">
    <property type="entry name" value="Ribosomal_uL5_C"/>
</dbReference>
<dbReference type="InterPro" id="IPR020929">
    <property type="entry name" value="Ribosomal_uL5_CS"/>
</dbReference>
<dbReference type="InterPro" id="IPR022803">
    <property type="entry name" value="Ribosomal_uL5_dom_sf"/>
</dbReference>
<dbReference type="InterPro" id="IPR031310">
    <property type="entry name" value="Ribosomal_uL5_N"/>
</dbReference>
<dbReference type="NCBIfam" id="NF000585">
    <property type="entry name" value="PRK00010.1"/>
    <property type="match status" value="1"/>
</dbReference>
<dbReference type="PANTHER" id="PTHR11994">
    <property type="entry name" value="60S RIBOSOMAL PROTEIN L11-RELATED"/>
    <property type="match status" value="1"/>
</dbReference>
<dbReference type="Pfam" id="PF00281">
    <property type="entry name" value="Ribosomal_L5"/>
    <property type="match status" value="1"/>
</dbReference>
<dbReference type="Pfam" id="PF00673">
    <property type="entry name" value="Ribosomal_L5_C"/>
    <property type="match status" value="1"/>
</dbReference>
<dbReference type="PIRSF" id="PIRSF002161">
    <property type="entry name" value="Ribosomal_L5"/>
    <property type="match status" value="1"/>
</dbReference>
<dbReference type="SUPFAM" id="SSF55282">
    <property type="entry name" value="RL5-like"/>
    <property type="match status" value="1"/>
</dbReference>
<dbReference type="PROSITE" id="PS00358">
    <property type="entry name" value="RIBOSOMAL_L5"/>
    <property type="match status" value="1"/>
</dbReference>
<sequence length="179" mass="20487">MARLKEIYRKEIAPKLKEELKLSNVMEVPRVTKITLNMGLGEAIGDKKVIEHAVADLEKITGQKVVVTYARKSIAGFKVREGWPIGVKVTLRRERMYEFLDRLLSISLPRVRDFRGLNAKSFDGRGNYSMGVKEQIIFPEIDYDKIDALRGLDITLTTTAKNDDEGRALLRAFKFPFRN</sequence>
<feature type="chain" id="PRO_0000243042" description="Large ribosomal subunit protein uL5">
    <location>
        <begin position="1"/>
        <end position="179"/>
    </location>
</feature>
<gene>
    <name evidence="1" type="primary">rplE</name>
    <name type="ordered locus">PFL_5570</name>
</gene>